<organism>
    <name type="scientific">Sinorhizobium fredii (strain NBRC 101917 / NGR234)</name>
    <dbReference type="NCBI Taxonomy" id="394"/>
    <lineage>
        <taxon>Bacteria</taxon>
        <taxon>Pseudomonadati</taxon>
        <taxon>Pseudomonadota</taxon>
        <taxon>Alphaproteobacteria</taxon>
        <taxon>Hyphomicrobiales</taxon>
        <taxon>Rhizobiaceae</taxon>
        <taxon>Sinorhizobium/Ensifer group</taxon>
        <taxon>Sinorhizobium</taxon>
    </lineage>
</organism>
<name>SCTL_SINFN</name>
<protein>
    <recommendedName>
        <fullName evidence="1">Type 3 secretion system stator protein</fullName>
        <shortName evidence="1">T3SS stator protein</shortName>
    </recommendedName>
</protein>
<dbReference type="EMBL" id="U00090">
    <property type="protein sequence ID" value="AAB91947.1"/>
    <property type="molecule type" value="Genomic_DNA"/>
</dbReference>
<dbReference type="RefSeq" id="NP_444160.1">
    <property type="nucleotide sequence ID" value="NC_000914.2"/>
</dbReference>
<dbReference type="RefSeq" id="WP_010875106.1">
    <property type="nucleotide sequence ID" value="NC_000914.2"/>
</dbReference>
<dbReference type="SMR" id="P55716"/>
<dbReference type="KEGG" id="rhi:NGR_a00650"/>
<dbReference type="eggNOG" id="COG1317">
    <property type="taxonomic scope" value="Bacteria"/>
</dbReference>
<dbReference type="HOGENOM" id="CLU_1335400_0_0_5"/>
<dbReference type="OrthoDB" id="9802671at2"/>
<dbReference type="Proteomes" id="UP000001054">
    <property type="component" value="Plasmid pNGR234a"/>
</dbReference>
<dbReference type="GO" id="GO:0005829">
    <property type="term" value="C:cytosol"/>
    <property type="evidence" value="ECO:0007669"/>
    <property type="project" value="TreeGrafter"/>
</dbReference>
<dbReference type="GO" id="GO:0030254">
    <property type="term" value="P:protein secretion by the type III secretion system"/>
    <property type="evidence" value="ECO:0007669"/>
    <property type="project" value="InterPro"/>
</dbReference>
<dbReference type="InterPro" id="IPR012842">
    <property type="entry name" value="T3SS_SctL/SctL2"/>
</dbReference>
<dbReference type="InterPro" id="IPR051472">
    <property type="entry name" value="T3SS_Stator/FliH"/>
</dbReference>
<dbReference type="InterPro" id="IPR010586">
    <property type="entry name" value="T3SS_stator_protein"/>
</dbReference>
<dbReference type="NCBIfam" id="TIGR02499">
    <property type="entry name" value="HrpE_YscL_not"/>
    <property type="match status" value="1"/>
</dbReference>
<dbReference type="PANTHER" id="PTHR34982:SF1">
    <property type="entry name" value="FLAGELLAR ASSEMBLY PROTEIN FLIH"/>
    <property type="match status" value="1"/>
</dbReference>
<dbReference type="PANTHER" id="PTHR34982">
    <property type="entry name" value="YOP PROTEINS TRANSLOCATION PROTEIN L"/>
    <property type="match status" value="1"/>
</dbReference>
<dbReference type="Pfam" id="PF06635">
    <property type="entry name" value="T3SS_SCTL"/>
    <property type="match status" value="1"/>
</dbReference>
<gene>
    <name evidence="1" type="primary">sctL</name>
    <name type="synonym">nolV</name>
    <name type="ordered locus">NGR_a00650</name>
    <name type="ORF">y4yH</name>
</gene>
<reference key="1">
    <citation type="journal article" date="1997" name="Nature">
        <title>Molecular basis of symbiosis between Rhizobium and legumes.</title>
        <authorList>
            <person name="Freiberg C.A."/>
            <person name="Fellay R."/>
            <person name="Bairoch A."/>
            <person name="Broughton W.J."/>
            <person name="Rosenthal A."/>
            <person name="Perret X."/>
        </authorList>
    </citation>
    <scope>NUCLEOTIDE SEQUENCE [LARGE SCALE GENOMIC DNA]</scope>
    <source>
        <strain>NBRC 101917 / NGR234</strain>
    </source>
</reference>
<reference key="2">
    <citation type="journal article" date="2009" name="Appl. Environ. Microbiol.">
        <title>Rhizobium sp. strain NGR234 possesses a remarkable number of secretion systems.</title>
        <authorList>
            <person name="Schmeisser C."/>
            <person name="Liesegang H."/>
            <person name="Krysciak D."/>
            <person name="Bakkou N."/>
            <person name="Le Quere A."/>
            <person name="Wollherr A."/>
            <person name="Heinemeyer I."/>
            <person name="Morgenstern B."/>
            <person name="Pommerening-Roeser A."/>
            <person name="Flores M."/>
            <person name="Palacios R."/>
            <person name="Brenner S."/>
            <person name="Gottschalk G."/>
            <person name="Schmitz R.A."/>
            <person name="Broughton W.J."/>
            <person name="Perret X."/>
            <person name="Strittmatter A.W."/>
            <person name="Streit W.R."/>
        </authorList>
    </citation>
    <scope>NUCLEOTIDE SEQUENCE [LARGE SCALE GENOMIC DNA]</scope>
    <source>
        <strain>NBRC 101917 / NGR234</strain>
    </source>
</reference>
<proteinExistence type="inferred from homology"/>
<feature type="chain" id="PRO_0000096950" description="Type 3 secretion system stator protein">
    <location>
        <begin position="1"/>
        <end position="208"/>
    </location>
</feature>
<accession>P55716</accession>
<keyword id="KW-0963">Cytoplasm</keyword>
<keyword id="KW-0536">Nodulation</keyword>
<keyword id="KW-0614">Plasmid</keyword>
<keyword id="KW-0653">Protein transport</keyword>
<keyword id="KW-1185">Reference proteome</keyword>
<keyword id="KW-0813">Transport</keyword>
<geneLocation type="plasmid">
    <name>sym pNGR234a</name>
</geneLocation>
<sequence length="208" mass="22981">MTADISAAPVAPQMRPLGPLIPASELNIWHSAGDALAAAKRHQQRVRTWARAAYQRERARGYAEGLNTGAEEMSGLIARAVTEVAQRKAVLEKELPQLVIEILSDLLGAFDPGELLVRAVRHAIERRYNGAEEVCLHVCPTQVDMLAREFAGCDGREKRPKVRIEPDPTLSPQECVLWSEYGNVALGLDAQMRALRLGFEYLSEEGEL</sequence>
<evidence type="ECO:0000250" key="1">
    <source>
        <dbReference type="UniProtKB" id="Q01253"/>
    </source>
</evidence>
<evidence type="ECO:0000305" key="2"/>
<comment type="function">
    <text evidence="1">Component of the type III secretion system (T3SS), also called injectisome, which is used to inject bacterial effector proteins into eukaryotic host cells (By similarity). Acts as a regulator of the HrcN/SctN ATPase activity (By similarity).</text>
</comment>
<comment type="subunit">
    <text evidence="1">The core secretion machinery of the T3SS is composed of approximately 20 different proteins, including cytoplasmic components, a base, an export apparatus and a needle (By similarity). This subunit is part of the cytosolic complex (By similarity).</text>
</comment>
<comment type="subcellular location">
    <subcellularLocation>
        <location evidence="1">Cytoplasm</location>
    </subcellularLocation>
</comment>
<comment type="similarity">
    <text evidence="2">Belongs to the SctL stator family.</text>
</comment>